<keyword id="KW-0406">Ion transport</keyword>
<keyword id="KW-0520">NAD</keyword>
<keyword id="KW-0915">Sodium</keyword>
<keyword id="KW-0739">Sodium transport</keyword>
<keyword id="KW-1278">Translocase</keyword>
<keyword id="KW-0813">Transport</keyword>
<keyword id="KW-0830">Ubiquinone</keyword>
<reference key="1">
    <citation type="submission" date="2002-12" db="EMBL/GenBank/DDBJ databases">
        <title>Complete genome sequence of Vibrio vulnificus CMCP6.</title>
        <authorList>
            <person name="Rhee J.H."/>
            <person name="Kim S.Y."/>
            <person name="Chung S.S."/>
            <person name="Kim J.J."/>
            <person name="Moon Y.H."/>
            <person name="Jeong H."/>
            <person name="Choy H.E."/>
        </authorList>
    </citation>
    <scope>NUCLEOTIDE SEQUENCE [LARGE SCALE GENOMIC DNA]</scope>
    <source>
        <strain>CMCP6</strain>
    </source>
</reference>
<name>NQRA_VIBVU</name>
<comment type="function">
    <text evidence="1">NQR complex catalyzes the reduction of ubiquinone-1 to ubiquinol by two successive reactions, coupled with the transport of Na(+) ions from the cytoplasm to the periplasm. NqrA to NqrE are probably involved in the second step, the conversion of ubisemiquinone to ubiquinol.</text>
</comment>
<comment type="catalytic activity">
    <reaction evidence="1">
        <text>a ubiquinone + n Na(+)(in) + NADH + H(+) = a ubiquinol + n Na(+)(out) + NAD(+)</text>
        <dbReference type="Rhea" id="RHEA:47748"/>
        <dbReference type="Rhea" id="RHEA-COMP:9565"/>
        <dbReference type="Rhea" id="RHEA-COMP:9566"/>
        <dbReference type="ChEBI" id="CHEBI:15378"/>
        <dbReference type="ChEBI" id="CHEBI:16389"/>
        <dbReference type="ChEBI" id="CHEBI:17976"/>
        <dbReference type="ChEBI" id="CHEBI:29101"/>
        <dbReference type="ChEBI" id="CHEBI:57540"/>
        <dbReference type="ChEBI" id="CHEBI:57945"/>
        <dbReference type="EC" id="7.2.1.1"/>
    </reaction>
</comment>
<comment type="subunit">
    <text evidence="1">Composed of six subunits; NqrA, NqrB, NqrC, NqrD, NqrE and NqrF.</text>
</comment>
<comment type="similarity">
    <text evidence="1">Belongs to the NqrA family.</text>
</comment>
<accession>Q8DBJ6</accession>
<organism>
    <name type="scientific">Vibrio vulnificus (strain CMCP6)</name>
    <dbReference type="NCBI Taxonomy" id="216895"/>
    <lineage>
        <taxon>Bacteria</taxon>
        <taxon>Pseudomonadati</taxon>
        <taxon>Pseudomonadota</taxon>
        <taxon>Gammaproteobacteria</taxon>
        <taxon>Vibrionales</taxon>
        <taxon>Vibrionaceae</taxon>
        <taxon>Vibrio</taxon>
    </lineage>
</organism>
<feature type="chain" id="PRO_0000214208" description="Na(+)-translocating NADH-quinone reductase subunit A">
    <location>
        <begin position="1"/>
        <end position="446"/>
    </location>
</feature>
<proteinExistence type="inferred from homology"/>
<dbReference type="EC" id="7.2.1.1" evidence="1"/>
<dbReference type="EMBL" id="AE016795">
    <property type="protein sequence ID" value="AAO10227.2"/>
    <property type="molecule type" value="Genomic_DNA"/>
</dbReference>
<dbReference type="RefSeq" id="WP_011079727.1">
    <property type="nucleotide sequence ID" value="NC_004459.3"/>
</dbReference>
<dbReference type="SMR" id="Q8DBJ6"/>
<dbReference type="KEGG" id="vvu:VV1_1821"/>
<dbReference type="HOGENOM" id="CLU_046656_0_0_6"/>
<dbReference type="Proteomes" id="UP000002275">
    <property type="component" value="Chromosome 1"/>
</dbReference>
<dbReference type="GO" id="GO:0016655">
    <property type="term" value="F:oxidoreductase activity, acting on NAD(P)H, quinone or similar compound as acceptor"/>
    <property type="evidence" value="ECO:0007669"/>
    <property type="project" value="UniProtKB-UniRule"/>
</dbReference>
<dbReference type="GO" id="GO:0006814">
    <property type="term" value="P:sodium ion transport"/>
    <property type="evidence" value="ECO:0007669"/>
    <property type="project" value="UniProtKB-UniRule"/>
</dbReference>
<dbReference type="HAMAP" id="MF_00425">
    <property type="entry name" value="NqrA"/>
    <property type="match status" value="1"/>
</dbReference>
<dbReference type="InterPro" id="IPR008703">
    <property type="entry name" value="NqrA"/>
</dbReference>
<dbReference type="InterPro" id="IPR056148">
    <property type="entry name" value="NQRA_2nd"/>
</dbReference>
<dbReference type="InterPro" id="IPR022615">
    <property type="entry name" value="NqrA_C_domain"/>
</dbReference>
<dbReference type="InterPro" id="IPR056147">
    <property type="entry name" value="NQRA_N"/>
</dbReference>
<dbReference type="NCBIfam" id="TIGR01936">
    <property type="entry name" value="nqrA"/>
    <property type="match status" value="1"/>
</dbReference>
<dbReference type="NCBIfam" id="NF003759">
    <property type="entry name" value="PRK05352.1-2"/>
    <property type="match status" value="1"/>
</dbReference>
<dbReference type="PANTHER" id="PTHR37839">
    <property type="entry name" value="NA(+)-TRANSLOCATING NADH-QUINONE REDUCTASE SUBUNIT A"/>
    <property type="match status" value="1"/>
</dbReference>
<dbReference type="PANTHER" id="PTHR37839:SF1">
    <property type="entry name" value="NA(+)-TRANSLOCATING NADH-QUINONE REDUCTASE SUBUNIT A"/>
    <property type="match status" value="1"/>
</dbReference>
<dbReference type="Pfam" id="PF24836">
    <property type="entry name" value="NQRA_2nd"/>
    <property type="match status" value="1"/>
</dbReference>
<dbReference type="Pfam" id="PF05896">
    <property type="entry name" value="NQRA_N"/>
    <property type="match status" value="1"/>
</dbReference>
<dbReference type="Pfam" id="PF11973">
    <property type="entry name" value="NQRA_SLBB"/>
    <property type="match status" value="1"/>
</dbReference>
<sequence length="446" mass="48538">MITIKKGLDLPIAGAPSQVINDGKSITKVALLGEEYVGMRPTMHVRVGDEVKKAQVLFEDKKNPGVKFTSPVSGKVIEVNRGAKRVLQSVVIEVAGDEQVTFDKFEASQLAGLDREVIKTQLVESGLWTALRTRPFSKVPAIESTTKAIFVTAMDTNPLAAKPELIINEQAEAFVAGLDVLSALTEEKVYVCKSGTSLPRSSQSNVEEHVFDGPHPAGLAGTHMHFLYPVNANNVAWSINYQDVIAFGQLFLTGELFTDRVVSLAGPVVNNPRLVRTIMGASLDELTDSEMMPGEVRVISGSVLTGTHATGPHAYLGRYHLQVSVLREGRDKELFGWATPGKNKFSVTRSFLGHLFKGQLFNMTTTTNGSDRAMVPIGNYERVVPLDMEPTLLLRDLCAGDTDSAQALGALELDEEDLALCTFVCPGKYEYGQLLRDCLNTIEKEG</sequence>
<protein>
    <recommendedName>
        <fullName evidence="1">Na(+)-translocating NADH-quinone reductase subunit A</fullName>
        <shortName evidence="1">Na(+)-NQR subunit A</shortName>
        <shortName evidence="1">Na(+)-translocating NQR subunit A</shortName>
        <ecNumber evidence="1">7.2.1.1</ecNumber>
    </recommendedName>
    <alternativeName>
        <fullName evidence="1">NQR complex subunit A</fullName>
    </alternativeName>
    <alternativeName>
        <fullName evidence="1">NQR-1 subunit A</fullName>
    </alternativeName>
</protein>
<gene>
    <name evidence="1" type="primary">nqrA</name>
    <name type="ordered locus">VV1_1821</name>
</gene>
<evidence type="ECO:0000255" key="1">
    <source>
        <dbReference type="HAMAP-Rule" id="MF_00425"/>
    </source>
</evidence>